<protein>
    <recommendedName>
        <fullName>Calponin-1</fullName>
    </recommendedName>
    <alternativeName>
        <fullName>Calponin, smooth muscle</fullName>
    </alternativeName>
</protein>
<sequence>MSNANFNRGPAYGLSAEVKNKLAQKYDPQTERQLRVWIEGATGRRIGDNFMDGLKDGVILCELINKLQPGSVQKVNDPVQNWHKLENIGNFLRAIKHYGVKPHDIFEANDLFENTNHTQVQSTLIALASQAKTKGNNVGLGVKYAEKQQRRFQPEKLREGRNIIGLQMGTNKFASQQGMTAYGTRRHLYDPKLGTDQPLDQATISLQMGTNKGASQAGMTAPGTKRQIFEPSLGMERCDTNIIGLQMGSNKGASQQGMTVYGLPRQVYDPKYCDAPGLLGEDGLNHSFYNSQ</sequence>
<evidence type="ECO:0000255" key="1">
    <source>
        <dbReference type="PROSITE-ProRule" id="PRU00044"/>
    </source>
</evidence>
<evidence type="ECO:0000269" key="2">
    <source>
    </source>
</evidence>
<evidence type="ECO:0000269" key="3">
    <source>
    </source>
</evidence>
<evidence type="ECO:0000269" key="4">
    <source>
    </source>
</evidence>
<evidence type="ECO:0000305" key="5"/>
<evidence type="ECO:0007829" key="6">
    <source>
        <dbReference type="PDB" id="1H67"/>
    </source>
</evidence>
<feature type="chain" id="PRO_0000204771" description="Calponin-1">
    <location>
        <begin position="1"/>
        <end position="292"/>
    </location>
</feature>
<feature type="domain" description="Calponin-homology (CH)" evidence="1">
    <location>
        <begin position="28"/>
        <end position="131"/>
    </location>
</feature>
<feature type="repeat" description="Calponin-like 1">
    <location>
        <begin position="164"/>
        <end position="189"/>
    </location>
</feature>
<feature type="repeat" description="Calponin-like 2">
    <location>
        <begin position="204"/>
        <end position="229"/>
    </location>
</feature>
<feature type="repeat" description="Calponin-like 3">
    <location>
        <begin position="243"/>
        <end position="268"/>
    </location>
</feature>
<feature type="region of interest" description="Calmodulin-binding" evidence="5">
    <location>
        <begin position="185"/>
        <end position="193"/>
    </location>
</feature>
<feature type="modified residue" description="Phosphothreonine; by ROCK2" evidence="2">
    <location>
        <position position="170"/>
    </location>
</feature>
<feature type="modified residue" description="Phosphoserine; by PKC, CaMK2 and ROCK2" evidence="2 3">
    <location>
        <position position="175"/>
    </location>
</feature>
<feature type="modified residue" description="Phosphothreonine; by ROCK2" evidence="2">
    <location>
        <position position="180"/>
    </location>
</feature>
<feature type="modified residue" description="Phosphothreonine; by PKC and CaMK2" evidence="2 4">
    <location>
        <position position="184"/>
    </location>
</feature>
<feature type="modified residue" description="Phosphothreonine; by ROCK2" evidence="2 4">
    <location>
        <position position="184"/>
    </location>
</feature>
<feature type="modified residue" description="Phosphothreonine; by ROCK2" evidence="2">
    <location>
        <position position="259"/>
    </location>
</feature>
<feature type="splice variant" id="VSP_000756" description="In isoform Beta." evidence="5">
    <location>
        <begin position="217"/>
        <end position="256"/>
    </location>
</feature>
<feature type="sequence conflict" description="In Ref. 1; AAA48651/AAA48652." evidence="5" ref="1">
    <original>K</original>
    <variation>T</variation>
    <location>
        <position position="66"/>
    </location>
</feature>
<feature type="helix" evidence="6">
    <location>
        <begin position="32"/>
        <end position="42"/>
    </location>
</feature>
<feature type="helix" evidence="6">
    <location>
        <begin position="50"/>
        <end position="56"/>
    </location>
</feature>
<feature type="helix" evidence="6">
    <location>
        <begin position="59"/>
        <end position="67"/>
    </location>
</feature>
<feature type="helix" evidence="6">
    <location>
        <begin position="82"/>
        <end position="98"/>
    </location>
</feature>
<feature type="helix" evidence="6">
    <location>
        <begin position="102"/>
        <end position="104"/>
    </location>
</feature>
<feature type="helix" evidence="6">
    <location>
        <begin position="108"/>
        <end position="113"/>
    </location>
</feature>
<feature type="helix" evidence="6">
    <location>
        <begin position="118"/>
        <end position="133"/>
    </location>
</feature>
<dbReference type="EMBL" id="M63559">
    <property type="protein sequence ID" value="AAA48651.1"/>
    <property type="molecule type" value="mRNA"/>
</dbReference>
<dbReference type="EMBL" id="M63560">
    <property type="protein sequence ID" value="AAA48652.1"/>
    <property type="molecule type" value="mRNA"/>
</dbReference>
<dbReference type="PIR" id="A39871">
    <property type="entry name" value="A39871"/>
</dbReference>
<dbReference type="RefSeq" id="NP_990847.1">
    <property type="nucleotide sequence ID" value="NM_205516.1"/>
</dbReference>
<dbReference type="PDB" id="1H67">
    <property type="method" value="NMR"/>
    <property type="chains" value="A=28-134"/>
</dbReference>
<dbReference type="PDBsum" id="1H67"/>
<dbReference type="BMRB" id="P26932"/>
<dbReference type="SMR" id="P26932"/>
<dbReference type="FunCoup" id="P26932">
    <property type="interactions" value="1002"/>
</dbReference>
<dbReference type="IntAct" id="P26932">
    <property type="interactions" value="1"/>
</dbReference>
<dbReference type="MINT" id="P26932"/>
<dbReference type="STRING" id="9031.ENSGALP00000046676"/>
<dbReference type="iPTMnet" id="P26932"/>
<dbReference type="GeneID" id="396522"/>
<dbReference type="KEGG" id="gga:396522"/>
<dbReference type="CTD" id="1264"/>
<dbReference type="VEuPathDB" id="HostDB:geneid_424485"/>
<dbReference type="InParanoid" id="P26932"/>
<dbReference type="PhylomeDB" id="P26932"/>
<dbReference type="EvolutionaryTrace" id="P26932"/>
<dbReference type="PRO" id="PR:P26932"/>
<dbReference type="Proteomes" id="UP000000539">
    <property type="component" value="Chromosome 30"/>
</dbReference>
<dbReference type="Bgee" id="ENSGALG00000041266">
    <property type="expression patterns" value="Expressed in colon and 11 other cell types or tissues"/>
</dbReference>
<dbReference type="GO" id="GO:0015629">
    <property type="term" value="C:actin cytoskeleton"/>
    <property type="evidence" value="ECO:0000318"/>
    <property type="project" value="GO_Central"/>
</dbReference>
<dbReference type="GO" id="GO:0051015">
    <property type="term" value="F:actin filament binding"/>
    <property type="evidence" value="ECO:0000318"/>
    <property type="project" value="GO_Central"/>
</dbReference>
<dbReference type="GO" id="GO:0005516">
    <property type="term" value="F:calmodulin binding"/>
    <property type="evidence" value="ECO:0007669"/>
    <property type="project" value="UniProtKB-KW"/>
</dbReference>
<dbReference type="GO" id="GO:0007015">
    <property type="term" value="P:actin filament organization"/>
    <property type="evidence" value="ECO:0000318"/>
    <property type="project" value="GO_Central"/>
</dbReference>
<dbReference type="GO" id="GO:0031032">
    <property type="term" value="P:actomyosin structure organization"/>
    <property type="evidence" value="ECO:0007669"/>
    <property type="project" value="InterPro"/>
</dbReference>
<dbReference type="CDD" id="cd21282">
    <property type="entry name" value="CH_CNN1"/>
    <property type="match status" value="1"/>
</dbReference>
<dbReference type="Gene3D" id="1.10.418.10">
    <property type="entry name" value="Calponin-like domain"/>
    <property type="match status" value="1"/>
</dbReference>
<dbReference type="InterPro" id="IPR050606">
    <property type="entry name" value="Calponin-like"/>
</dbReference>
<dbReference type="InterPro" id="IPR001997">
    <property type="entry name" value="Calponin/LIMCH1"/>
</dbReference>
<dbReference type="InterPro" id="IPR000557">
    <property type="entry name" value="Calponin_repeat"/>
</dbReference>
<dbReference type="InterPro" id="IPR001715">
    <property type="entry name" value="CH_dom"/>
</dbReference>
<dbReference type="InterPro" id="IPR036872">
    <property type="entry name" value="CH_dom_sf"/>
</dbReference>
<dbReference type="InterPro" id="IPR003096">
    <property type="entry name" value="SM22_calponin"/>
</dbReference>
<dbReference type="PANTHER" id="PTHR47385">
    <property type="entry name" value="CALPONIN"/>
    <property type="match status" value="1"/>
</dbReference>
<dbReference type="PANTHER" id="PTHR47385:SF24">
    <property type="entry name" value="MUSCLE-SPECIFIC PROTEIN 20"/>
    <property type="match status" value="1"/>
</dbReference>
<dbReference type="Pfam" id="PF00402">
    <property type="entry name" value="Calponin"/>
    <property type="match status" value="3"/>
</dbReference>
<dbReference type="Pfam" id="PF00307">
    <property type="entry name" value="CH"/>
    <property type="match status" value="1"/>
</dbReference>
<dbReference type="PRINTS" id="PR00889">
    <property type="entry name" value="CALPONIN"/>
</dbReference>
<dbReference type="PRINTS" id="PR00888">
    <property type="entry name" value="SM22CALPONIN"/>
</dbReference>
<dbReference type="SMART" id="SM00033">
    <property type="entry name" value="CH"/>
    <property type="match status" value="1"/>
</dbReference>
<dbReference type="SUPFAM" id="SSF47576">
    <property type="entry name" value="Calponin-homology domain, CH-domain"/>
    <property type="match status" value="1"/>
</dbReference>
<dbReference type="PROSITE" id="PS01052">
    <property type="entry name" value="CALPONIN_1"/>
    <property type="match status" value="3"/>
</dbReference>
<dbReference type="PROSITE" id="PS51122">
    <property type="entry name" value="CALPONIN_2"/>
    <property type="match status" value="3"/>
</dbReference>
<dbReference type="PROSITE" id="PS50021">
    <property type="entry name" value="CH"/>
    <property type="match status" value="1"/>
</dbReference>
<keyword id="KW-0002">3D-structure</keyword>
<keyword id="KW-0009">Actin-binding</keyword>
<keyword id="KW-0025">Alternative splicing</keyword>
<keyword id="KW-0112">Calmodulin-binding</keyword>
<keyword id="KW-0903">Direct protein sequencing</keyword>
<keyword id="KW-0597">Phosphoprotein</keyword>
<keyword id="KW-1185">Reference proteome</keyword>
<keyword id="KW-0677">Repeat</keyword>
<organism>
    <name type="scientific">Gallus gallus</name>
    <name type="common">Chicken</name>
    <dbReference type="NCBI Taxonomy" id="9031"/>
    <lineage>
        <taxon>Eukaryota</taxon>
        <taxon>Metazoa</taxon>
        <taxon>Chordata</taxon>
        <taxon>Craniata</taxon>
        <taxon>Vertebrata</taxon>
        <taxon>Euteleostomi</taxon>
        <taxon>Archelosauria</taxon>
        <taxon>Archosauria</taxon>
        <taxon>Dinosauria</taxon>
        <taxon>Saurischia</taxon>
        <taxon>Theropoda</taxon>
        <taxon>Coelurosauria</taxon>
        <taxon>Aves</taxon>
        <taxon>Neognathae</taxon>
        <taxon>Galloanserae</taxon>
        <taxon>Galliformes</taxon>
        <taxon>Phasianidae</taxon>
        <taxon>Phasianinae</taxon>
        <taxon>Gallus</taxon>
    </lineage>
</organism>
<reference key="1">
    <citation type="journal article" date="1991" name="J. Biol. Chem.">
        <title>Molecular cloning and sequence analysis of smooth muscle calponin.</title>
        <authorList>
            <person name="Takahashi K."/>
            <person name="Nadal-Ginard B."/>
        </authorList>
    </citation>
    <scope>NUCLEOTIDE SEQUENCE [MRNA]</scope>
    <source>
        <tissue>Gizzard smooth muscle</tissue>
    </source>
</reference>
<reference key="2">
    <citation type="journal article" date="1993" name="Cell. Signal.">
        <title>Calponin: thin filament-linked regulation of smooth muscle contraction.</title>
        <authorList>
            <person name="Winder S.J."/>
            <person name="Walsh M.P."/>
        </authorList>
    </citation>
    <scope>NUCLEOTIDE SEQUENCE [MRNA]</scope>
    <source>
        <tissue>Gizzard smooth muscle</tissue>
    </source>
</reference>
<reference key="3">
    <citation type="journal article" date="1992" name="J. Biol. Chem.">
        <title>Mapping of the functional domains in the amino-terminal region of calponin.</title>
        <authorList>
            <person name="Mezgueldi M."/>
            <person name="Fattoum A."/>
            <person name="Derancourt J."/>
            <person name="Kassab R."/>
        </authorList>
    </citation>
    <scope>PROTEIN SEQUENCE OF 7-21; 52-66 AND 183-194</scope>
</reference>
<reference key="4">
    <citation type="journal article" date="2000" name="Biochem. Biophys. Res. Commun.">
        <title>Identification of calponin as a novel substrate of Rho-kinase.</title>
        <authorList>
            <person name="Kaneko T."/>
            <person name="Amano M."/>
            <person name="Maeda A."/>
            <person name="Goto H."/>
            <person name="Takahashi K."/>
            <person name="Ito M."/>
            <person name="Kaibuchi K."/>
        </authorList>
    </citation>
    <scope>PROTEIN SEQUENCE OF 157-192 AND 252-271</scope>
    <scope>PHOSPHORYLATION AT THR-170; SER-175; THR-180; THR-184 AND THR-259</scope>
</reference>
<reference key="5">
    <citation type="journal article" date="1993" name="J. Biochem.">
        <title>Characterization of wild type and mutant chicken gizzard alpha calponin expressed in E. coli.</title>
        <authorList>
            <person name="Gong B.J."/>
            <person name="Mabuchi K."/>
            <person name="Takahashi K."/>
            <person name="Nadal-Ginard B."/>
            <person name="Tao T."/>
        </authorList>
    </citation>
    <scope>PARTIAL PROTEIN SEQUENCE</scope>
    <scope>MUTAGENESIS</scope>
</reference>
<reference key="6">
    <citation type="journal article" date="1993" name="Biochem. J.">
        <title>Calponin phosphorylation in vitro and in intact muscle.</title>
        <authorList>
            <person name="Winder S.J."/>
            <person name="Allen B.G."/>
            <person name="Fraser E.D."/>
            <person name="Kang H.M."/>
            <person name="Kargacin G.J."/>
            <person name="Walsh M.P."/>
        </authorList>
    </citation>
    <scope>PHOSPHORYLATION AT SER-175</scope>
</reference>
<reference key="7">
    <citation type="journal article" date="1993" name="J. Biol. Chem.">
        <title>Identification of the regulatory site in smooth muscle calponin that is phosphorylated by protein kinase C.</title>
        <authorList>
            <person name="Nakamura F."/>
            <person name="Mino T."/>
            <person name="Yamamoto J."/>
            <person name="Naka M."/>
            <person name="Tanaka T."/>
        </authorList>
    </citation>
    <scope>PHOSPHORYLATION AT THR-184</scope>
</reference>
<reference key="8">
    <citation type="journal article" date="2002" name="Structure">
        <title>Solution structure of the calponin CH domain and fitting to the 3D-helical reconstruction of F-actin:calponin.</title>
        <authorList>
            <person name="Bramham J."/>
            <person name="Hodgkinson J.L."/>
            <person name="Smith B.O."/>
            <person name="Uhrin D."/>
            <person name="Barlow P.N."/>
            <person name="Winder S.J."/>
        </authorList>
    </citation>
    <scope>STRUCTURE BY NMR OF 27-134</scope>
</reference>
<gene>
    <name type="primary">CNN1</name>
</gene>
<name>CNN1_CHICK</name>
<comment type="function">
    <text>Thin filament-associated protein that is implicated in the regulation and modulation of smooth muscle contraction. It is capable of binding to actin, calmodulin and tropomyosin. The interaction of calponin with actin inhibits the actomyosin Mg-ATPase activity.</text>
</comment>
<comment type="interaction">
    <interactant intactId="EBI-8602797">
        <id>P26932</id>
    </interactant>
    <interactant intactId="EBI-367540">
        <id>P68135</id>
        <label>ACTA1</label>
    </interactant>
    <organismsDiffer>true</organismsDiffer>
    <experiments>5</experiments>
</comment>
<comment type="alternative products">
    <event type="alternative splicing"/>
    <isoform>
        <id>P26932-1</id>
        <name>Alpha</name>
        <sequence type="displayed"/>
    </isoform>
    <isoform>
        <id>P26932-2</id>
        <name>Beta</name>
        <sequence type="described" ref="VSP_000756"/>
    </isoform>
</comment>
<comment type="tissue specificity">
    <text>Smooth muscle, and tissues containing significant amounts of smooth muscle.</text>
</comment>
<comment type="PTM">
    <text evidence="2 3 4">Phosphorylation by PKC or CaM kinase II reduces the binding of calponin to F-actin and tropomyosin.</text>
</comment>
<comment type="similarity">
    <text evidence="5">Belongs to the calponin family.</text>
</comment>
<accession>P26932</accession>
<accession>P26933</accession>
<accession>Q9PSG0</accession>
<proteinExistence type="evidence at protein level"/>